<sequence length="142" mass="15471">MAKKVTGYLKLQVPAGAANPSPPIGPALGQRGLNIMEFCKAFNAQTQKEEKNTPIPVVITIYADRSFTFEMKTPPMSYFLKQAAKIQSGSKLPGRDFAGKVTSAQVREIAEKKMKDLNCDTVESAMRMVEGSARSMGLRVEG</sequence>
<feature type="chain" id="PRO_1000195702" description="Large ribosomal subunit protein uL11">
    <location>
        <begin position="1"/>
        <end position="142"/>
    </location>
</feature>
<reference key="1">
    <citation type="submission" date="2008-05" db="EMBL/GenBank/DDBJ databases">
        <title>Complete sequence of Rhodopseudomonas palustris TIE-1.</title>
        <authorList>
            <consortium name="US DOE Joint Genome Institute"/>
            <person name="Lucas S."/>
            <person name="Copeland A."/>
            <person name="Lapidus A."/>
            <person name="Glavina del Rio T."/>
            <person name="Dalin E."/>
            <person name="Tice H."/>
            <person name="Pitluck S."/>
            <person name="Chain P."/>
            <person name="Malfatti S."/>
            <person name="Shin M."/>
            <person name="Vergez L."/>
            <person name="Lang D."/>
            <person name="Schmutz J."/>
            <person name="Larimer F."/>
            <person name="Land M."/>
            <person name="Hauser L."/>
            <person name="Kyrpides N."/>
            <person name="Mikhailova N."/>
            <person name="Emerson D."/>
            <person name="Newman D.K."/>
            <person name="Roden E."/>
            <person name="Richardson P."/>
        </authorList>
    </citation>
    <scope>NUCLEOTIDE SEQUENCE [LARGE SCALE GENOMIC DNA]</scope>
    <source>
        <strain>TIE-1</strain>
    </source>
</reference>
<evidence type="ECO:0000255" key="1">
    <source>
        <dbReference type="HAMAP-Rule" id="MF_00736"/>
    </source>
</evidence>
<evidence type="ECO:0000305" key="2"/>
<comment type="function">
    <text evidence="1">Forms part of the ribosomal stalk which helps the ribosome interact with GTP-bound translation factors.</text>
</comment>
<comment type="subunit">
    <text evidence="1">Part of the ribosomal stalk of the 50S ribosomal subunit. Interacts with L10 and the large rRNA to form the base of the stalk. L10 forms an elongated spine to which L12 dimers bind in a sequential fashion forming a multimeric L10(L12)X complex.</text>
</comment>
<comment type="PTM">
    <text evidence="1">One or more lysine residues are methylated.</text>
</comment>
<comment type="similarity">
    <text evidence="1">Belongs to the universal ribosomal protein uL11 family.</text>
</comment>
<keyword id="KW-0488">Methylation</keyword>
<keyword id="KW-0687">Ribonucleoprotein</keyword>
<keyword id="KW-0689">Ribosomal protein</keyword>
<keyword id="KW-0694">RNA-binding</keyword>
<keyword id="KW-0699">rRNA-binding</keyword>
<name>RL11_RHOPT</name>
<dbReference type="EMBL" id="CP001096">
    <property type="protein sequence ID" value="ACF02192.1"/>
    <property type="molecule type" value="Genomic_DNA"/>
</dbReference>
<dbReference type="RefSeq" id="WP_011158816.1">
    <property type="nucleotide sequence ID" value="NC_011004.1"/>
</dbReference>
<dbReference type="SMR" id="B3QC05"/>
<dbReference type="GeneID" id="66894359"/>
<dbReference type="KEGG" id="rpt:Rpal_3692"/>
<dbReference type="HOGENOM" id="CLU_074237_2_0_5"/>
<dbReference type="OrthoDB" id="9802408at2"/>
<dbReference type="Proteomes" id="UP000001725">
    <property type="component" value="Chromosome"/>
</dbReference>
<dbReference type="GO" id="GO:0022625">
    <property type="term" value="C:cytosolic large ribosomal subunit"/>
    <property type="evidence" value="ECO:0007669"/>
    <property type="project" value="TreeGrafter"/>
</dbReference>
<dbReference type="GO" id="GO:0070180">
    <property type="term" value="F:large ribosomal subunit rRNA binding"/>
    <property type="evidence" value="ECO:0007669"/>
    <property type="project" value="UniProtKB-UniRule"/>
</dbReference>
<dbReference type="GO" id="GO:0003735">
    <property type="term" value="F:structural constituent of ribosome"/>
    <property type="evidence" value="ECO:0007669"/>
    <property type="project" value="InterPro"/>
</dbReference>
<dbReference type="GO" id="GO:0006412">
    <property type="term" value="P:translation"/>
    <property type="evidence" value="ECO:0007669"/>
    <property type="project" value="UniProtKB-UniRule"/>
</dbReference>
<dbReference type="CDD" id="cd00349">
    <property type="entry name" value="Ribosomal_L11"/>
    <property type="match status" value="1"/>
</dbReference>
<dbReference type="FunFam" id="1.10.10.250:FF:000001">
    <property type="entry name" value="50S ribosomal protein L11"/>
    <property type="match status" value="1"/>
</dbReference>
<dbReference type="FunFam" id="3.30.1550.10:FF:000001">
    <property type="entry name" value="50S ribosomal protein L11"/>
    <property type="match status" value="1"/>
</dbReference>
<dbReference type="Gene3D" id="1.10.10.250">
    <property type="entry name" value="Ribosomal protein L11, C-terminal domain"/>
    <property type="match status" value="1"/>
</dbReference>
<dbReference type="Gene3D" id="3.30.1550.10">
    <property type="entry name" value="Ribosomal protein L11/L12, N-terminal domain"/>
    <property type="match status" value="1"/>
</dbReference>
<dbReference type="HAMAP" id="MF_00736">
    <property type="entry name" value="Ribosomal_uL11"/>
    <property type="match status" value="1"/>
</dbReference>
<dbReference type="InterPro" id="IPR000911">
    <property type="entry name" value="Ribosomal_uL11"/>
</dbReference>
<dbReference type="InterPro" id="IPR006519">
    <property type="entry name" value="Ribosomal_uL11_bac-typ"/>
</dbReference>
<dbReference type="InterPro" id="IPR020783">
    <property type="entry name" value="Ribosomal_uL11_C"/>
</dbReference>
<dbReference type="InterPro" id="IPR036769">
    <property type="entry name" value="Ribosomal_uL11_C_sf"/>
</dbReference>
<dbReference type="InterPro" id="IPR020785">
    <property type="entry name" value="Ribosomal_uL11_CS"/>
</dbReference>
<dbReference type="InterPro" id="IPR020784">
    <property type="entry name" value="Ribosomal_uL11_N"/>
</dbReference>
<dbReference type="InterPro" id="IPR036796">
    <property type="entry name" value="Ribosomal_uL11_N_sf"/>
</dbReference>
<dbReference type="NCBIfam" id="TIGR01632">
    <property type="entry name" value="L11_bact"/>
    <property type="match status" value="1"/>
</dbReference>
<dbReference type="PANTHER" id="PTHR11661">
    <property type="entry name" value="60S RIBOSOMAL PROTEIN L12"/>
    <property type="match status" value="1"/>
</dbReference>
<dbReference type="PANTHER" id="PTHR11661:SF1">
    <property type="entry name" value="LARGE RIBOSOMAL SUBUNIT PROTEIN UL11M"/>
    <property type="match status" value="1"/>
</dbReference>
<dbReference type="Pfam" id="PF00298">
    <property type="entry name" value="Ribosomal_L11"/>
    <property type="match status" value="1"/>
</dbReference>
<dbReference type="Pfam" id="PF03946">
    <property type="entry name" value="Ribosomal_L11_N"/>
    <property type="match status" value="1"/>
</dbReference>
<dbReference type="SMART" id="SM00649">
    <property type="entry name" value="RL11"/>
    <property type="match status" value="1"/>
</dbReference>
<dbReference type="SUPFAM" id="SSF54747">
    <property type="entry name" value="Ribosomal L11/L12e N-terminal domain"/>
    <property type="match status" value="1"/>
</dbReference>
<dbReference type="SUPFAM" id="SSF46906">
    <property type="entry name" value="Ribosomal protein L11, C-terminal domain"/>
    <property type="match status" value="1"/>
</dbReference>
<dbReference type="PROSITE" id="PS00359">
    <property type="entry name" value="RIBOSOMAL_L11"/>
    <property type="match status" value="1"/>
</dbReference>
<accession>B3QC05</accession>
<gene>
    <name evidence="1" type="primary">rplK</name>
    <name type="ordered locus">Rpal_3692</name>
</gene>
<protein>
    <recommendedName>
        <fullName evidence="1">Large ribosomal subunit protein uL11</fullName>
    </recommendedName>
    <alternativeName>
        <fullName evidence="2">50S ribosomal protein L11</fullName>
    </alternativeName>
</protein>
<organism>
    <name type="scientific">Rhodopseudomonas palustris (strain TIE-1)</name>
    <dbReference type="NCBI Taxonomy" id="395960"/>
    <lineage>
        <taxon>Bacteria</taxon>
        <taxon>Pseudomonadati</taxon>
        <taxon>Pseudomonadota</taxon>
        <taxon>Alphaproteobacteria</taxon>
        <taxon>Hyphomicrobiales</taxon>
        <taxon>Nitrobacteraceae</taxon>
        <taxon>Rhodopseudomonas</taxon>
    </lineage>
</organism>
<proteinExistence type="inferred from homology"/>